<sequence length="458" mass="50143">MKPTETLQEKGKLFLVVMMPILITQIGLYAMNFFDTVMSGQAGANDLAGVAIGSSLWVPVFTGLNGVLLALTPIIAQSIGAEKRDDVPYVFLQGLYLSIAISIAVILIGAVVLDPILSAMSLEDEVGRIAKEYLIGLAFGIVPLFIYTTIRCLIDSLGETRVTMFITLLSLPINIFFNYVLIFGKLGFPRLGGVGAGYASAITYWFILAVAIVVVVKVRPFTDFQLFKKLYHVSLKKWKEILLLGLPIGFTIFFETSIFAAVTLLMSTFDTATIAAHQAAVNFASFLYMIPLSIAFTLTIAVGYEVGAKRVEDARQYSRLGITFALIMGLVAGVIIYVLRAPVASLYTNDSQVAWLIQQFLIYSIFFQLSDALATPIQGVLRGHKDVNVPFVMALVSFWIIGLPTGYLLANFSPLGPYGYWIGLITGLASCAIALSWRLKQMQRKFERAARLSQNGNS</sequence>
<keyword id="KW-0050">Antiport</keyword>
<keyword id="KW-1003">Cell membrane</keyword>
<keyword id="KW-0406">Ion transport</keyword>
<keyword id="KW-0472">Membrane</keyword>
<keyword id="KW-1185">Reference proteome</keyword>
<keyword id="KW-0812">Transmembrane</keyword>
<keyword id="KW-1133">Transmembrane helix</keyword>
<keyword id="KW-0813">Transport</keyword>
<gene>
    <name type="primary">norM</name>
    <name type="ordered locus">BH0860</name>
</gene>
<dbReference type="EMBL" id="BA000004">
    <property type="protein sequence ID" value="BAB04579.1"/>
    <property type="molecule type" value="Genomic_DNA"/>
</dbReference>
<dbReference type="PIR" id="D83757">
    <property type="entry name" value="D83757"/>
</dbReference>
<dbReference type="RefSeq" id="WP_010897033.1">
    <property type="nucleotide sequence ID" value="NC_002570.2"/>
</dbReference>
<dbReference type="SMR" id="Q9KEJ2"/>
<dbReference type="STRING" id="272558.gene:10726734"/>
<dbReference type="DNASU" id="891595"/>
<dbReference type="GeneID" id="87596406"/>
<dbReference type="KEGG" id="bha:BH0860"/>
<dbReference type="eggNOG" id="COG0534">
    <property type="taxonomic scope" value="Bacteria"/>
</dbReference>
<dbReference type="HOGENOM" id="CLU_012893_6_0_9"/>
<dbReference type="OrthoDB" id="9780160at2"/>
<dbReference type="Proteomes" id="UP000001258">
    <property type="component" value="Chromosome"/>
</dbReference>
<dbReference type="GO" id="GO:0005886">
    <property type="term" value="C:plasma membrane"/>
    <property type="evidence" value="ECO:0007669"/>
    <property type="project" value="UniProtKB-SubCell"/>
</dbReference>
<dbReference type="GO" id="GO:0015297">
    <property type="term" value="F:antiporter activity"/>
    <property type="evidence" value="ECO:0007669"/>
    <property type="project" value="UniProtKB-KW"/>
</dbReference>
<dbReference type="GO" id="GO:0042910">
    <property type="term" value="F:xenobiotic transmembrane transporter activity"/>
    <property type="evidence" value="ECO:0007669"/>
    <property type="project" value="InterPro"/>
</dbReference>
<dbReference type="GO" id="GO:0006811">
    <property type="term" value="P:monoatomic ion transport"/>
    <property type="evidence" value="ECO:0007669"/>
    <property type="project" value="UniProtKB-KW"/>
</dbReference>
<dbReference type="CDD" id="cd13131">
    <property type="entry name" value="MATE_NorM_like"/>
    <property type="match status" value="1"/>
</dbReference>
<dbReference type="InterPro" id="IPR002528">
    <property type="entry name" value="MATE_fam"/>
</dbReference>
<dbReference type="InterPro" id="IPR050222">
    <property type="entry name" value="MATE_MdtK"/>
</dbReference>
<dbReference type="InterPro" id="IPR048279">
    <property type="entry name" value="MdtK-like"/>
</dbReference>
<dbReference type="NCBIfam" id="TIGR00797">
    <property type="entry name" value="matE"/>
    <property type="match status" value="1"/>
</dbReference>
<dbReference type="PANTHER" id="PTHR43298:SF2">
    <property type="entry name" value="FMN_FAD EXPORTER YEEO-RELATED"/>
    <property type="match status" value="1"/>
</dbReference>
<dbReference type="PANTHER" id="PTHR43298">
    <property type="entry name" value="MULTIDRUG RESISTANCE PROTEIN NORM-RELATED"/>
    <property type="match status" value="1"/>
</dbReference>
<dbReference type="Pfam" id="PF01554">
    <property type="entry name" value="MatE"/>
    <property type="match status" value="2"/>
</dbReference>
<dbReference type="PIRSF" id="PIRSF006603">
    <property type="entry name" value="DinF"/>
    <property type="match status" value="1"/>
</dbReference>
<comment type="function">
    <text evidence="1">Multidrug efflux pump.</text>
</comment>
<comment type="subcellular location">
    <subcellularLocation>
        <location evidence="1">Cell membrane</location>
        <topology evidence="1">Multi-pass membrane protein</topology>
    </subcellularLocation>
</comment>
<comment type="similarity">
    <text evidence="3">Belongs to the multi antimicrobial extrusion (MATE) (TC 2.A.66.1) family.</text>
</comment>
<protein>
    <recommendedName>
        <fullName>Probable multidrug resistance protein NorM</fullName>
    </recommendedName>
    <alternativeName>
        <fullName>Multidrug-efflux transporter</fullName>
    </alternativeName>
</protein>
<name>NORM_HALH5</name>
<accession>Q9KEJ2</accession>
<organism>
    <name type="scientific">Halalkalibacterium halodurans (strain ATCC BAA-125 / DSM 18197 / FERM 7344 / JCM 9153 / C-125)</name>
    <name type="common">Bacillus halodurans</name>
    <dbReference type="NCBI Taxonomy" id="272558"/>
    <lineage>
        <taxon>Bacteria</taxon>
        <taxon>Bacillati</taxon>
        <taxon>Bacillota</taxon>
        <taxon>Bacilli</taxon>
        <taxon>Bacillales</taxon>
        <taxon>Bacillaceae</taxon>
        <taxon>Halalkalibacterium (ex Joshi et al. 2022)</taxon>
    </lineage>
</organism>
<feature type="chain" id="PRO_0000164201" description="Probable multidrug resistance protein NorM">
    <location>
        <begin position="1"/>
        <end position="458"/>
    </location>
</feature>
<feature type="transmembrane region" description="Helical" evidence="2">
    <location>
        <begin position="14"/>
        <end position="34"/>
    </location>
</feature>
<feature type="transmembrane region" description="Helical" evidence="2">
    <location>
        <begin position="56"/>
        <end position="76"/>
    </location>
</feature>
<feature type="transmembrane region" description="Helical" evidence="2">
    <location>
        <begin position="97"/>
        <end position="117"/>
    </location>
</feature>
<feature type="transmembrane region" description="Helical" evidence="2">
    <location>
        <begin position="134"/>
        <end position="154"/>
    </location>
</feature>
<feature type="transmembrane region" description="Helical" evidence="2">
    <location>
        <begin position="164"/>
        <end position="184"/>
    </location>
</feature>
<feature type="transmembrane region" description="Helical" evidence="2">
    <location>
        <begin position="196"/>
        <end position="216"/>
    </location>
</feature>
<feature type="transmembrane region" description="Helical" evidence="2">
    <location>
        <begin position="241"/>
        <end position="261"/>
    </location>
</feature>
<feature type="transmembrane region" description="Helical" evidence="2">
    <location>
        <begin position="283"/>
        <end position="303"/>
    </location>
</feature>
<feature type="transmembrane region" description="Helical" evidence="2">
    <location>
        <begin position="320"/>
        <end position="340"/>
    </location>
</feature>
<feature type="transmembrane region" description="Helical" evidence="2">
    <location>
        <begin position="353"/>
        <end position="373"/>
    </location>
</feature>
<feature type="transmembrane region" description="Helical" evidence="2">
    <location>
        <begin position="389"/>
        <end position="409"/>
    </location>
</feature>
<feature type="transmembrane region" description="Helical" evidence="2">
    <location>
        <begin position="415"/>
        <end position="435"/>
    </location>
</feature>
<evidence type="ECO:0000250" key="1"/>
<evidence type="ECO:0000255" key="2"/>
<evidence type="ECO:0000305" key="3"/>
<reference key="1">
    <citation type="journal article" date="2000" name="Nucleic Acids Res.">
        <title>Complete genome sequence of the alkaliphilic bacterium Bacillus halodurans and genomic sequence comparison with Bacillus subtilis.</title>
        <authorList>
            <person name="Takami H."/>
            <person name="Nakasone K."/>
            <person name="Takaki Y."/>
            <person name="Maeno G."/>
            <person name="Sasaki R."/>
            <person name="Masui N."/>
            <person name="Fuji F."/>
            <person name="Hirama C."/>
            <person name="Nakamura Y."/>
            <person name="Ogasawara N."/>
            <person name="Kuhara S."/>
            <person name="Horikoshi K."/>
        </authorList>
    </citation>
    <scope>NUCLEOTIDE SEQUENCE [LARGE SCALE GENOMIC DNA]</scope>
    <source>
        <strain>ATCC BAA-125 / DSM 18197 / FERM 7344 / JCM 9153 / C-125</strain>
    </source>
</reference>
<proteinExistence type="inferred from homology"/>